<comment type="function">
    <text evidence="1">Involved in cell death (apoptosis).</text>
</comment>
<comment type="similarity">
    <text evidence="4">Belongs to the peptidase C14B family.</text>
</comment>
<organism>
    <name type="scientific">Kluyveromyces lactis (strain ATCC 8585 / CBS 2359 / DSM 70799 / NBRC 1267 / NRRL Y-1140 / WM37)</name>
    <name type="common">Yeast</name>
    <name type="synonym">Candida sphaerica</name>
    <dbReference type="NCBI Taxonomy" id="284590"/>
    <lineage>
        <taxon>Eukaryota</taxon>
        <taxon>Fungi</taxon>
        <taxon>Dikarya</taxon>
        <taxon>Ascomycota</taxon>
        <taxon>Saccharomycotina</taxon>
        <taxon>Saccharomycetes</taxon>
        <taxon>Saccharomycetales</taxon>
        <taxon>Saccharomycetaceae</taxon>
        <taxon>Kluyveromyces</taxon>
    </lineage>
</organism>
<dbReference type="EC" id="3.4.22.-"/>
<dbReference type="EMBL" id="CR382126">
    <property type="protein sequence ID" value="CAG97826.2"/>
    <property type="molecule type" value="Genomic_DNA"/>
</dbReference>
<dbReference type="RefSeq" id="XP_455119.2">
    <property type="nucleotide sequence ID" value="XM_455119.2"/>
</dbReference>
<dbReference type="SMR" id="Q6CLS0"/>
<dbReference type="FunCoup" id="Q6CLS0">
    <property type="interactions" value="396"/>
</dbReference>
<dbReference type="STRING" id="284590.Q6CLS0"/>
<dbReference type="PaxDb" id="284590-Q6CLS0"/>
<dbReference type="KEGG" id="kla:KLLA0_F00880g"/>
<dbReference type="eggNOG" id="KOG1546">
    <property type="taxonomic scope" value="Eukaryota"/>
</dbReference>
<dbReference type="HOGENOM" id="CLU_029389_0_2_1"/>
<dbReference type="InParanoid" id="Q6CLS0"/>
<dbReference type="Proteomes" id="UP000000598">
    <property type="component" value="Chromosome F"/>
</dbReference>
<dbReference type="GO" id="GO:0005737">
    <property type="term" value="C:cytoplasm"/>
    <property type="evidence" value="ECO:0007669"/>
    <property type="project" value="TreeGrafter"/>
</dbReference>
<dbReference type="GO" id="GO:0004197">
    <property type="term" value="F:cysteine-type endopeptidase activity"/>
    <property type="evidence" value="ECO:0007669"/>
    <property type="project" value="InterPro"/>
</dbReference>
<dbReference type="GO" id="GO:0006915">
    <property type="term" value="P:apoptotic process"/>
    <property type="evidence" value="ECO:0007669"/>
    <property type="project" value="UniProtKB-KW"/>
</dbReference>
<dbReference type="GO" id="GO:0006508">
    <property type="term" value="P:proteolysis"/>
    <property type="evidence" value="ECO:0007669"/>
    <property type="project" value="UniProtKB-KW"/>
</dbReference>
<dbReference type="FunFam" id="3.40.50.12660:FF:000005">
    <property type="entry name" value="Mca1p"/>
    <property type="match status" value="1"/>
</dbReference>
<dbReference type="Gene3D" id="3.40.50.12660">
    <property type="match status" value="1"/>
</dbReference>
<dbReference type="InterPro" id="IPR029030">
    <property type="entry name" value="Caspase-like_dom_sf"/>
</dbReference>
<dbReference type="InterPro" id="IPR050452">
    <property type="entry name" value="Metacaspase"/>
</dbReference>
<dbReference type="InterPro" id="IPR011600">
    <property type="entry name" value="Pept_C14_caspase"/>
</dbReference>
<dbReference type="PANTHER" id="PTHR48104:SF30">
    <property type="entry name" value="METACASPASE-1"/>
    <property type="match status" value="1"/>
</dbReference>
<dbReference type="PANTHER" id="PTHR48104">
    <property type="entry name" value="METACASPASE-4"/>
    <property type="match status" value="1"/>
</dbReference>
<dbReference type="Pfam" id="PF00656">
    <property type="entry name" value="Peptidase_C14"/>
    <property type="match status" value="1"/>
</dbReference>
<dbReference type="SUPFAM" id="SSF52129">
    <property type="entry name" value="Caspase-like"/>
    <property type="match status" value="1"/>
</dbReference>
<gene>
    <name type="primary">MCA1</name>
    <name type="ordered locus">KLLA0F00880g</name>
</gene>
<feature type="propeptide" id="PRO_0000333650" evidence="2">
    <location>
        <begin position="1"/>
        <end status="unknown"/>
    </location>
</feature>
<feature type="chain" id="PRO_0000333651" description="Metacaspase-1">
    <location>
        <begin status="unknown"/>
        <end position="433"/>
    </location>
</feature>
<feature type="region of interest" description="Disordered" evidence="3">
    <location>
        <begin position="1"/>
        <end position="123"/>
    </location>
</feature>
<feature type="compositionally biased region" description="Low complexity" evidence="3">
    <location>
        <begin position="9"/>
        <end position="44"/>
    </location>
</feature>
<feature type="compositionally biased region" description="Polar residues" evidence="3">
    <location>
        <begin position="45"/>
        <end position="55"/>
    </location>
</feature>
<feature type="compositionally biased region" description="Polar residues" evidence="3">
    <location>
        <begin position="83"/>
        <end position="109"/>
    </location>
</feature>
<feature type="active site" evidence="1">
    <location>
        <position position="222"/>
    </location>
</feature>
<feature type="active site" evidence="1">
    <location>
        <position position="278"/>
    </location>
</feature>
<proteinExistence type="inferred from homology"/>
<protein>
    <recommendedName>
        <fullName>Metacaspase-1</fullName>
        <ecNumber>3.4.22.-</ecNumber>
    </recommendedName>
</protein>
<evidence type="ECO:0000250" key="1"/>
<evidence type="ECO:0000255" key="2"/>
<evidence type="ECO:0000256" key="3">
    <source>
        <dbReference type="SAM" id="MobiDB-lite"/>
    </source>
</evidence>
<evidence type="ECO:0000305" key="4"/>
<reference key="1">
    <citation type="journal article" date="2004" name="Nature">
        <title>Genome evolution in yeasts.</title>
        <authorList>
            <person name="Dujon B."/>
            <person name="Sherman D."/>
            <person name="Fischer G."/>
            <person name="Durrens P."/>
            <person name="Casaregola S."/>
            <person name="Lafontaine I."/>
            <person name="de Montigny J."/>
            <person name="Marck C."/>
            <person name="Neuveglise C."/>
            <person name="Talla E."/>
            <person name="Goffard N."/>
            <person name="Frangeul L."/>
            <person name="Aigle M."/>
            <person name="Anthouard V."/>
            <person name="Babour A."/>
            <person name="Barbe V."/>
            <person name="Barnay S."/>
            <person name="Blanchin S."/>
            <person name="Beckerich J.-M."/>
            <person name="Beyne E."/>
            <person name="Bleykasten C."/>
            <person name="Boisrame A."/>
            <person name="Boyer J."/>
            <person name="Cattolico L."/>
            <person name="Confanioleri F."/>
            <person name="de Daruvar A."/>
            <person name="Despons L."/>
            <person name="Fabre E."/>
            <person name="Fairhead C."/>
            <person name="Ferry-Dumazet H."/>
            <person name="Groppi A."/>
            <person name="Hantraye F."/>
            <person name="Hennequin C."/>
            <person name="Jauniaux N."/>
            <person name="Joyet P."/>
            <person name="Kachouri R."/>
            <person name="Kerrest A."/>
            <person name="Koszul R."/>
            <person name="Lemaire M."/>
            <person name="Lesur I."/>
            <person name="Ma L."/>
            <person name="Muller H."/>
            <person name="Nicaud J.-M."/>
            <person name="Nikolski M."/>
            <person name="Oztas S."/>
            <person name="Ozier-Kalogeropoulos O."/>
            <person name="Pellenz S."/>
            <person name="Potier S."/>
            <person name="Richard G.-F."/>
            <person name="Straub M.-L."/>
            <person name="Suleau A."/>
            <person name="Swennen D."/>
            <person name="Tekaia F."/>
            <person name="Wesolowski-Louvel M."/>
            <person name="Westhof E."/>
            <person name="Wirth B."/>
            <person name="Zeniou-Meyer M."/>
            <person name="Zivanovic Y."/>
            <person name="Bolotin-Fukuhara M."/>
            <person name="Thierry A."/>
            <person name="Bouchier C."/>
            <person name="Caudron B."/>
            <person name="Scarpelli C."/>
            <person name="Gaillardin C."/>
            <person name="Weissenbach J."/>
            <person name="Wincker P."/>
            <person name="Souciet J.-L."/>
        </authorList>
    </citation>
    <scope>NUCLEOTIDE SEQUENCE [LARGE SCALE GENOMIC DNA]</scope>
    <source>
        <strain>ATCC 8585 / CBS 2359 / DSM 70799 / NBRC 1267 / NRRL Y-1140 / WM37</strain>
    </source>
</reference>
<name>MCA1_KLULA</name>
<sequence>MYPGRAKPTYNNQQAQQAQSQVGYQTGYSNAQPQQQYYTAPQQQNVSGSSMSFQHQFYPPPNQSPPQYNTGQYARPAAPPPGQQNYRNDIQQNHASGTVNGPSGYQQPQAMYKPPSQVQHTGPNNQVAYQYSQCTGRRKALLIGINYFGSANELRGCINDSHNMFNFLTQRYGYKAEDIVMLNDDTTDPVRVPTKANMLRAMQWLVKDARPNDALFFHYSGHGGQTEDLDGDEEDGMDDVIYPVDFQMAGHIVDDDMHAIMVSPLQPGVRLTALFDSCHSGTVLDLPYTYSTKGVIKEPNMWKDVGSSGLQAAMAYATGNTTSLVSSLGNVFTTITKSNNNVDRERVKQIKFSPADVIMFSGSKDNQTSADATENGQNTGAMSWAFLTVLSKQPQQSYLSLLQNMRAELSSKYTQKPQLSCSHEIDTNLQFLL</sequence>
<keyword id="KW-0053">Apoptosis</keyword>
<keyword id="KW-0378">Hydrolase</keyword>
<keyword id="KW-0645">Protease</keyword>
<keyword id="KW-1185">Reference proteome</keyword>
<keyword id="KW-0788">Thiol protease</keyword>
<keyword id="KW-0865">Zymogen</keyword>
<accession>Q6CLS0</accession>